<sequence>MSRRQTCSLLLIAFGLFYLVPLSNHGLWIPDETRYAQISQAMLLGGDWVSPHFLGLRYFEKPVAGYWMIALGQAVFGENLFGVRIASVVATALSVLLAYLLARRLWRDPRTSLACALLYASFGLIAGQSGYANLDPQFTFWVNLSLVALWHALDAGSRRARLLGWTLLGLACGMGFLTKGFLAWLLPVLVALPYMLWQRRWRELLGYGALAVLAALLVCLPWALAVHAREADYWRFFFWHEHIRRFAGEDAQHSRPWWFYLPLLAVACLPWSGLLPSALRQAWHERRQAPVVFLALWLLLPLAFFSLSRGKLPTYIMPCLLPLALLMGHALVQRLRLGNSVALRGNGLLNLGLALLALAALAYLQLRKPVYQEEPFELFLVLLVIGAWAAAGLAQWRYPLRAWAAPLLASWVLIALLPAAMPNHVVQNKTPDLFVAEHLDELTGARHLLSNDLGAASALAWRLRRSDVTLYDTRGELKYGLSYPEHSQRSVPLADIRQWLWRARQDGSIAVLLRINSASDRYQLALLPGDGERYRNGNLVLAILPQVRP</sequence>
<organism>
    <name type="scientific">Pseudomonas aeruginosa (strain ATCC 15692 / DSM 22644 / CIP 104116 / JCM 14847 / LMG 12228 / 1C / PRS 101 / PAO1)</name>
    <dbReference type="NCBI Taxonomy" id="208964"/>
    <lineage>
        <taxon>Bacteria</taxon>
        <taxon>Pseudomonadati</taxon>
        <taxon>Pseudomonadota</taxon>
        <taxon>Gammaproteobacteria</taxon>
        <taxon>Pseudomonadales</taxon>
        <taxon>Pseudomonadaceae</taxon>
        <taxon>Pseudomonas</taxon>
    </lineage>
</organism>
<keyword id="KW-0997">Cell inner membrane</keyword>
<keyword id="KW-1003">Cell membrane</keyword>
<keyword id="KW-0328">Glycosyltransferase</keyword>
<keyword id="KW-0441">Lipid A biosynthesis</keyword>
<keyword id="KW-0444">Lipid biosynthesis</keyword>
<keyword id="KW-0443">Lipid metabolism</keyword>
<keyword id="KW-0448">Lipopolysaccharide biosynthesis</keyword>
<keyword id="KW-0472">Membrane</keyword>
<keyword id="KW-1185">Reference proteome</keyword>
<keyword id="KW-0808">Transferase</keyword>
<keyword id="KW-0812">Transmembrane</keyword>
<keyword id="KW-1133">Transmembrane helix</keyword>
<dbReference type="EC" id="2.4.2.43" evidence="1"/>
<dbReference type="EMBL" id="AE004091">
    <property type="protein sequence ID" value="AAG06944.1"/>
    <property type="molecule type" value="Genomic_DNA"/>
</dbReference>
<dbReference type="PIR" id="G83201">
    <property type="entry name" value="G83201"/>
</dbReference>
<dbReference type="RefSeq" id="NP_252246.1">
    <property type="nucleotide sequence ID" value="NC_002516.2"/>
</dbReference>
<dbReference type="RefSeq" id="WP_003112877.1">
    <property type="nucleotide sequence ID" value="NZ_QZGE01000001.1"/>
</dbReference>
<dbReference type="SMR" id="Q9HY61"/>
<dbReference type="FunCoup" id="Q9HY61">
    <property type="interactions" value="168"/>
</dbReference>
<dbReference type="STRING" id="208964.PA3556"/>
<dbReference type="CAZy" id="GT83">
    <property type="family name" value="Glycosyltransferase Family 83"/>
</dbReference>
<dbReference type="PaxDb" id="208964-PA3556"/>
<dbReference type="GeneID" id="879122"/>
<dbReference type="KEGG" id="pae:PA3556"/>
<dbReference type="PATRIC" id="fig|208964.12.peg.3721"/>
<dbReference type="PseudoCAP" id="PA3556"/>
<dbReference type="HOGENOM" id="CLU_019200_2_1_6"/>
<dbReference type="InParanoid" id="Q9HY61"/>
<dbReference type="OrthoDB" id="9775035at2"/>
<dbReference type="PhylomeDB" id="Q9HY61"/>
<dbReference type="BioCyc" id="PAER208964:G1FZ6-3624-MONOMER"/>
<dbReference type="UniPathway" id="UPA00037"/>
<dbReference type="Proteomes" id="UP000002438">
    <property type="component" value="Chromosome"/>
</dbReference>
<dbReference type="GO" id="GO:0005886">
    <property type="term" value="C:plasma membrane"/>
    <property type="evidence" value="ECO:0000318"/>
    <property type="project" value="GO_Central"/>
</dbReference>
<dbReference type="GO" id="GO:0103015">
    <property type="term" value="F:4-amino-4-deoxy-L-arabinose transferase activity"/>
    <property type="evidence" value="ECO:0007669"/>
    <property type="project" value="UniProtKB-EC"/>
</dbReference>
<dbReference type="GO" id="GO:0000030">
    <property type="term" value="F:mannosyltransferase activity"/>
    <property type="evidence" value="ECO:0007669"/>
    <property type="project" value="InterPro"/>
</dbReference>
<dbReference type="GO" id="GO:0016763">
    <property type="term" value="F:pentosyltransferase activity"/>
    <property type="evidence" value="ECO:0000318"/>
    <property type="project" value="GO_Central"/>
</dbReference>
<dbReference type="GO" id="GO:0009245">
    <property type="term" value="P:lipid A biosynthetic process"/>
    <property type="evidence" value="ECO:0007669"/>
    <property type="project" value="UniProtKB-UniRule"/>
</dbReference>
<dbReference type="GO" id="GO:0009103">
    <property type="term" value="P:lipopolysaccharide biosynthetic process"/>
    <property type="evidence" value="ECO:0000318"/>
    <property type="project" value="GO_Central"/>
</dbReference>
<dbReference type="GO" id="GO:0006493">
    <property type="term" value="P:protein O-linked glycosylation"/>
    <property type="evidence" value="ECO:0007669"/>
    <property type="project" value="InterPro"/>
</dbReference>
<dbReference type="GO" id="GO:0010041">
    <property type="term" value="P:response to iron(III) ion"/>
    <property type="evidence" value="ECO:0000318"/>
    <property type="project" value="GO_Central"/>
</dbReference>
<dbReference type="HAMAP" id="MF_01165">
    <property type="entry name" value="ArnT_transfer"/>
    <property type="match status" value="1"/>
</dbReference>
<dbReference type="InterPro" id="IPR022839">
    <property type="entry name" value="ArnT_tfrase"/>
</dbReference>
<dbReference type="InterPro" id="IPR003342">
    <property type="entry name" value="Glyco_trans_39/83"/>
</dbReference>
<dbReference type="InterPro" id="IPR050297">
    <property type="entry name" value="LipidA_mod_glycosyltrf_83"/>
</dbReference>
<dbReference type="NCBIfam" id="NF009784">
    <property type="entry name" value="PRK13279.1"/>
    <property type="match status" value="1"/>
</dbReference>
<dbReference type="PANTHER" id="PTHR33908">
    <property type="entry name" value="MANNOSYLTRANSFERASE YKCB-RELATED"/>
    <property type="match status" value="1"/>
</dbReference>
<dbReference type="PANTHER" id="PTHR33908:SF3">
    <property type="entry name" value="UNDECAPRENYL PHOSPHATE-ALPHA-4-AMINO-4-DEOXY-L-ARABINOSE ARABINOSYL TRANSFERASE"/>
    <property type="match status" value="1"/>
</dbReference>
<dbReference type="Pfam" id="PF02366">
    <property type="entry name" value="PMT"/>
    <property type="match status" value="1"/>
</dbReference>
<feature type="chain" id="PRO_0000380018" description="Undecaprenyl phosphate-alpha-4-amino-4-deoxy-L-arabinose arabinosyl transferase">
    <location>
        <begin position="1"/>
        <end position="549"/>
    </location>
</feature>
<feature type="transmembrane region" description="Helical" evidence="1">
    <location>
        <begin position="9"/>
        <end position="29"/>
    </location>
</feature>
<feature type="transmembrane region" description="Helical" evidence="1">
    <location>
        <begin position="80"/>
        <end position="100"/>
    </location>
</feature>
<feature type="transmembrane region" description="Helical" evidence="1">
    <location>
        <begin position="112"/>
        <end position="132"/>
    </location>
</feature>
<feature type="transmembrane region" description="Helical" evidence="1">
    <location>
        <begin position="136"/>
        <end position="156"/>
    </location>
</feature>
<feature type="transmembrane region" description="Helical" evidence="1">
    <location>
        <begin position="176"/>
        <end position="196"/>
    </location>
</feature>
<feature type="transmembrane region" description="Helical" evidence="1">
    <location>
        <begin position="204"/>
        <end position="224"/>
    </location>
</feature>
<feature type="transmembrane region" description="Helical" evidence="1">
    <location>
        <begin position="256"/>
        <end position="276"/>
    </location>
</feature>
<feature type="transmembrane region" description="Helical" evidence="1">
    <location>
        <begin position="288"/>
        <end position="308"/>
    </location>
</feature>
<feature type="transmembrane region" description="Helical" evidence="1">
    <location>
        <begin position="312"/>
        <end position="332"/>
    </location>
</feature>
<feature type="transmembrane region" description="Helical" evidence="1">
    <location>
        <begin position="346"/>
        <end position="366"/>
    </location>
</feature>
<feature type="transmembrane region" description="Helical" evidence="1">
    <location>
        <begin position="376"/>
        <end position="396"/>
    </location>
</feature>
<feature type="transmembrane region" description="Helical" evidence="1">
    <location>
        <begin position="402"/>
        <end position="422"/>
    </location>
</feature>
<comment type="function">
    <text evidence="1">Catalyzes the transfer of the L-Ara4N moiety of the glycolipid undecaprenyl phosphate-alpha-L-Ara4N to lipid A. The modified arabinose is attached to lipid A and is required for resistance to polymyxin and cationic antimicrobial peptides.</text>
</comment>
<comment type="catalytic activity">
    <reaction evidence="1">
        <text>4-amino-4-deoxy-alpha-L-arabinopyranosyl di-trans,octa-cis-undecaprenyl phosphate + lipid IVA = lipid IIA + di-trans,octa-cis-undecaprenyl phosphate.</text>
        <dbReference type="EC" id="2.4.2.43"/>
    </reaction>
</comment>
<comment type="pathway">
    <text evidence="1">Lipopolysaccharide metabolism; 4-amino-4-deoxy-beta-L-arabinose-lipid A biosynthesis.</text>
</comment>
<comment type="subcellular location">
    <subcellularLocation>
        <location evidence="1">Cell inner membrane</location>
        <topology evidence="1">Multi-pass membrane protein</topology>
    </subcellularLocation>
</comment>
<comment type="similarity">
    <text evidence="1">Belongs to the glycosyltransferase 83 family.</text>
</comment>
<proteinExistence type="inferred from homology"/>
<gene>
    <name evidence="1" type="primary">arnT</name>
    <name type="ordered locus">PA3556</name>
</gene>
<protein>
    <recommendedName>
        <fullName evidence="1">Undecaprenyl phosphate-alpha-4-amino-4-deoxy-L-arabinose arabinosyl transferase</fullName>
        <ecNumber evidence="1">2.4.2.43</ecNumber>
    </recommendedName>
    <alternativeName>
        <fullName evidence="1">4-amino-4-deoxy-L-arabinose lipid A transferase</fullName>
    </alternativeName>
    <alternativeName>
        <fullName evidence="1">Lipid IV(A) 4-amino-4-deoxy-L-arabinosyltransferase</fullName>
    </alternativeName>
    <alternativeName>
        <fullName evidence="1">Undecaprenyl phosphate-alpha-L-Ara4N transferase</fullName>
    </alternativeName>
</protein>
<name>ARNT_PSEAE</name>
<accession>Q9HY61</accession>
<reference key="1">
    <citation type="journal article" date="2000" name="Nature">
        <title>Complete genome sequence of Pseudomonas aeruginosa PAO1, an opportunistic pathogen.</title>
        <authorList>
            <person name="Stover C.K."/>
            <person name="Pham X.-Q.T."/>
            <person name="Erwin A.L."/>
            <person name="Mizoguchi S.D."/>
            <person name="Warrener P."/>
            <person name="Hickey M.J."/>
            <person name="Brinkman F.S.L."/>
            <person name="Hufnagle W.O."/>
            <person name="Kowalik D.J."/>
            <person name="Lagrou M."/>
            <person name="Garber R.L."/>
            <person name="Goltry L."/>
            <person name="Tolentino E."/>
            <person name="Westbrock-Wadman S."/>
            <person name="Yuan Y."/>
            <person name="Brody L.L."/>
            <person name="Coulter S.N."/>
            <person name="Folger K.R."/>
            <person name="Kas A."/>
            <person name="Larbig K."/>
            <person name="Lim R.M."/>
            <person name="Smith K.A."/>
            <person name="Spencer D.H."/>
            <person name="Wong G.K.-S."/>
            <person name="Wu Z."/>
            <person name="Paulsen I.T."/>
            <person name="Reizer J."/>
            <person name="Saier M.H. Jr."/>
            <person name="Hancock R.E.W."/>
            <person name="Lory S."/>
            <person name="Olson M.V."/>
        </authorList>
    </citation>
    <scope>NUCLEOTIDE SEQUENCE [LARGE SCALE GENOMIC DNA]</scope>
    <source>
        <strain>ATCC 15692 / DSM 22644 / CIP 104116 / JCM 14847 / LMG 12228 / 1C / PRS 101 / PAO1</strain>
    </source>
</reference>
<evidence type="ECO:0000255" key="1">
    <source>
        <dbReference type="HAMAP-Rule" id="MF_01165"/>
    </source>
</evidence>